<dbReference type="EMBL" id="BC083402">
    <property type="protein sequence ID" value="AAH83402.1"/>
    <property type="molecule type" value="mRNA"/>
</dbReference>
<dbReference type="RefSeq" id="NP_001006020.1">
    <property type="nucleotide sequence ID" value="NM_001006020.1"/>
</dbReference>
<dbReference type="SMR" id="Q5XJA2"/>
<dbReference type="STRING" id="7955.ENSDARP00000098966"/>
<dbReference type="PaxDb" id="7955-ENSDARP00000098966"/>
<dbReference type="GeneID" id="449999"/>
<dbReference type="KEGG" id="dre:449999"/>
<dbReference type="AGR" id="ZFIN:ZDB-GENE-041010-113"/>
<dbReference type="CTD" id="449999"/>
<dbReference type="ZFIN" id="ZDB-GENE-041010-113">
    <property type="gene designation" value="ccdc149a"/>
</dbReference>
<dbReference type="eggNOG" id="KOG4687">
    <property type="taxonomic scope" value="Eukaryota"/>
</dbReference>
<dbReference type="InParanoid" id="Q5XJA2"/>
<dbReference type="OrthoDB" id="5917629at2759"/>
<dbReference type="PhylomeDB" id="Q5XJA2"/>
<dbReference type="PRO" id="PR:Q5XJA2"/>
<dbReference type="Proteomes" id="UP000000437">
    <property type="component" value="Chromosome 7"/>
</dbReference>
<dbReference type="InterPro" id="IPR019179">
    <property type="entry name" value="Coiled-coil_dom-contain_pr_149"/>
</dbReference>
<dbReference type="PANTHER" id="PTHR21682">
    <property type="entry name" value="COILED-COIL DOMAIN-CONTAINING PROTEIN 149"/>
    <property type="match status" value="1"/>
</dbReference>
<dbReference type="PANTHER" id="PTHR21682:SF2">
    <property type="entry name" value="COILED-COIL DOMAIN-CONTAINING PROTEIN 149"/>
    <property type="match status" value="1"/>
</dbReference>
<dbReference type="Pfam" id="PF09789">
    <property type="entry name" value="CC149"/>
    <property type="match status" value="1"/>
</dbReference>
<organism>
    <name type="scientific">Danio rerio</name>
    <name type="common">Zebrafish</name>
    <name type="synonym">Brachydanio rerio</name>
    <dbReference type="NCBI Taxonomy" id="7955"/>
    <lineage>
        <taxon>Eukaryota</taxon>
        <taxon>Metazoa</taxon>
        <taxon>Chordata</taxon>
        <taxon>Craniata</taxon>
        <taxon>Vertebrata</taxon>
        <taxon>Euteleostomi</taxon>
        <taxon>Actinopterygii</taxon>
        <taxon>Neopterygii</taxon>
        <taxon>Teleostei</taxon>
        <taxon>Ostariophysi</taxon>
        <taxon>Cypriniformes</taxon>
        <taxon>Danionidae</taxon>
        <taxon>Danioninae</taxon>
        <taxon>Danio</taxon>
    </lineage>
</organism>
<reference key="1">
    <citation type="submission" date="2004-10" db="EMBL/GenBank/DDBJ databases">
        <authorList>
            <consortium name="NIH - Zebrafish Gene Collection (ZGC) project"/>
        </authorList>
    </citation>
    <scope>NUCLEOTIDE SEQUENCE [LARGE SCALE MRNA]</scope>
    <source>
        <tissue>Ovary</tissue>
    </source>
</reference>
<sequence>MANQLRETHQSLKKKYRELIDGESSLPPEKRNQVNLAQLLMDSRERNKQLAEEVKEVTQRLSETQGDNKLLRMTITKQRLGDDEVGIRHFPAHEREDLVRQLEKAALHREELEHTLKTLSDELQDVKAERTVFKEKSKRLNLELNHILGGQEKRIIDVDALCMENKYLHERLKQVQEEVSLLKSNIQKYKTALDRRKNPEIGGKSSSRSLTGVLSPKQVHGFLSEENGCSLPATPQSISDLKSLATALLETIHEKNIIIQHQRQTNRILGNRVADLERKLKTLEISGLWSLPDDRTGRGGPSLWERDTAGDDSFPNMWRGSRPGPDGGAGEEDTPVTREESDPSGTRTNGQVGTQLKEKKTACCPVTEVIAAVEELCVVLEAEDAVLALDPAGLQLQWTQTPSVTLEQSACKNTDIKNSAGSPATDLGEISEGAAVKIEPIEESGSSFVS</sequence>
<comment type="similarity">
    <text evidence="3">Belongs to the CCDC149 family.</text>
</comment>
<feature type="chain" id="PRO_0000344211" description="Coiled-coil domain-containing protein 149-A">
    <location>
        <begin position="1"/>
        <end position="450"/>
    </location>
</feature>
<feature type="region of interest" description="Disordered" evidence="2">
    <location>
        <begin position="290"/>
        <end position="358"/>
    </location>
</feature>
<feature type="coiled-coil region" evidence="1">
    <location>
        <begin position="1"/>
        <end position="197"/>
    </location>
</feature>
<feature type="coiled-coil region" evidence="1">
    <location>
        <begin position="259"/>
        <end position="286"/>
    </location>
</feature>
<feature type="compositionally biased region" description="Polar residues" evidence="2">
    <location>
        <begin position="343"/>
        <end position="354"/>
    </location>
</feature>
<evidence type="ECO:0000255" key="1"/>
<evidence type="ECO:0000256" key="2">
    <source>
        <dbReference type="SAM" id="MobiDB-lite"/>
    </source>
</evidence>
<evidence type="ECO:0000305" key="3"/>
<proteinExistence type="evidence at transcript level"/>
<accession>Q5XJA2</accession>
<protein>
    <recommendedName>
        <fullName>Coiled-coil domain-containing protein 149-A</fullName>
    </recommendedName>
</protein>
<gene>
    <name type="primary">ccdc149a</name>
    <name type="ORF">zgc:103485</name>
</gene>
<name>C149A_DANRE</name>
<keyword id="KW-0175">Coiled coil</keyword>
<keyword id="KW-1185">Reference proteome</keyword>